<proteinExistence type="evidence at transcript level"/>
<feature type="chain" id="PRO_0000213376" description="Adenosine 3'-phospho 5'-phosphosulfate transporter 1">
    <location>
        <begin position="1"/>
        <end position="432"/>
    </location>
</feature>
<feature type="transmembrane region" description="Helical" evidence="2">
    <location>
        <begin position="5"/>
        <end position="25"/>
    </location>
</feature>
<feature type="transmembrane region" description="Helical" evidence="2">
    <location>
        <begin position="40"/>
        <end position="60"/>
    </location>
</feature>
<feature type="transmembrane region" description="Helical" evidence="2">
    <location>
        <begin position="109"/>
        <end position="129"/>
    </location>
</feature>
<feature type="transmembrane region" description="Helical" evidence="2">
    <location>
        <begin position="154"/>
        <end position="174"/>
    </location>
</feature>
<feature type="transmembrane region" description="Helical" evidence="2">
    <location>
        <begin position="238"/>
        <end position="258"/>
    </location>
</feature>
<feature type="transmembrane region" description="Helical" evidence="2">
    <location>
        <begin position="265"/>
        <end position="285"/>
    </location>
</feature>
<feature type="transmembrane region" description="Helical" evidence="2">
    <location>
        <begin position="299"/>
        <end position="319"/>
    </location>
</feature>
<feature type="transmembrane region" description="Helical" evidence="2">
    <location>
        <begin position="353"/>
        <end position="373"/>
    </location>
</feature>
<feature type="transmembrane region" description="Helical" evidence="2">
    <location>
        <begin position="387"/>
        <end position="407"/>
    </location>
</feature>
<feature type="modified residue" description="Phosphoserine" evidence="1">
    <location>
        <position position="427"/>
    </location>
</feature>
<comment type="function">
    <text evidence="1">Probably functions as a 3'-phosphoadenylyl sulfate:adenosine 3',5'-bisphosphate antiporter at the Golgi membranes. Mediates the transport from the cytosol into the lumen of the Golgi of 3'-phosphoadenylyl sulfate/adenosine 3'-phospho 5'-phosphosulfate (PAPS), a universal sulfuryl donor for sulfation events that take place in that compartment.</text>
</comment>
<comment type="catalytic activity">
    <reaction evidence="1">
        <text>3'-phosphoadenylyl sulfate(in) + adenosine 3',5'-bisphosphate(out) = 3'-phosphoadenylyl sulfate(out) + adenosine 3',5'-bisphosphate(in)</text>
        <dbReference type="Rhea" id="RHEA:76063"/>
        <dbReference type="ChEBI" id="CHEBI:58339"/>
        <dbReference type="ChEBI" id="CHEBI:58343"/>
    </reaction>
</comment>
<comment type="subcellular location">
    <subcellularLocation>
        <location evidence="1">Golgi apparatus membrane</location>
        <topology evidence="2">Multi-pass membrane protein</topology>
    </subcellularLocation>
</comment>
<comment type="similarity">
    <text evidence="3">Belongs to the nucleotide-sugar transporter family. SLC35B subfamily.</text>
</comment>
<comment type="sequence caution" evidence="3">
    <conflict type="erroneous termination">
        <sequence resource="EMBL-CDS" id="CAH91659"/>
    </conflict>
    <text>Truncated C-terminus.</text>
</comment>
<accession>Q5R9A1</accession>
<keyword id="KW-0050">Antiport</keyword>
<keyword id="KW-0333">Golgi apparatus</keyword>
<keyword id="KW-0472">Membrane</keyword>
<keyword id="KW-0597">Phosphoprotein</keyword>
<keyword id="KW-1185">Reference proteome</keyword>
<keyword id="KW-0812">Transmembrane</keyword>
<keyword id="KW-1133">Transmembrane helix</keyword>
<keyword id="KW-0813">Transport</keyword>
<evidence type="ECO:0000250" key="1">
    <source>
        <dbReference type="UniProtKB" id="Q8TB61"/>
    </source>
</evidence>
<evidence type="ECO:0000255" key="2"/>
<evidence type="ECO:0000305" key="3"/>
<dbReference type="EMBL" id="CR859489">
    <property type="protein sequence ID" value="CAH91659.1"/>
    <property type="status" value="ALT_SEQ"/>
    <property type="molecule type" value="mRNA"/>
</dbReference>
<dbReference type="RefSeq" id="NP_001127450.2">
    <property type="nucleotide sequence ID" value="NM_001133978.2"/>
</dbReference>
<dbReference type="FunCoup" id="Q5R9A1">
    <property type="interactions" value="1515"/>
</dbReference>
<dbReference type="STRING" id="9601.ENSPPYP00000016008"/>
<dbReference type="GeneID" id="100174521"/>
<dbReference type="KEGG" id="pon:100174521"/>
<dbReference type="CTD" id="347734"/>
<dbReference type="eggNOG" id="KOG1581">
    <property type="taxonomic scope" value="Eukaryota"/>
</dbReference>
<dbReference type="InParanoid" id="Q5R9A1"/>
<dbReference type="OrthoDB" id="10035043at2759"/>
<dbReference type="Proteomes" id="UP000001595">
    <property type="component" value="Unplaced"/>
</dbReference>
<dbReference type="GO" id="GO:0005789">
    <property type="term" value="C:endoplasmic reticulum membrane"/>
    <property type="evidence" value="ECO:0007669"/>
    <property type="project" value="TreeGrafter"/>
</dbReference>
<dbReference type="GO" id="GO:0005794">
    <property type="term" value="C:Golgi apparatus"/>
    <property type="evidence" value="ECO:0000250"/>
    <property type="project" value="UniProtKB"/>
</dbReference>
<dbReference type="GO" id="GO:0000139">
    <property type="term" value="C:Golgi membrane"/>
    <property type="evidence" value="ECO:0000250"/>
    <property type="project" value="UniProtKB"/>
</dbReference>
<dbReference type="GO" id="GO:0046964">
    <property type="term" value="F:3'-phosphoadenosine 5'-phosphosulfate transmembrane transporter activity"/>
    <property type="evidence" value="ECO:0007669"/>
    <property type="project" value="TreeGrafter"/>
</dbReference>
<dbReference type="GO" id="GO:0015297">
    <property type="term" value="F:antiporter activity"/>
    <property type="evidence" value="ECO:0007669"/>
    <property type="project" value="UniProtKB-KW"/>
</dbReference>
<dbReference type="GO" id="GO:0050650">
    <property type="term" value="P:chondroitin sulfate proteoglycan biosynthetic process"/>
    <property type="evidence" value="ECO:0000250"/>
    <property type="project" value="UniProtKB"/>
</dbReference>
<dbReference type="InterPro" id="IPR013657">
    <property type="entry name" value="SCL35B1-4/HUT1"/>
</dbReference>
<dbReference type="PANTHER" id="PTHR10778:SF13">
    <property type="entry name" value="ADENOSINE 3'-PHOSPHO 5'-PHOSPHOSULFATE TRANSPORTER 1"/>
    <property type="match status" value="1"/>
</dbReference>
<dbReference type="PANTHER" id="PTHR10778">
    <property type="entry name" value="SOLUTE CARRIER FAMILY 35 MEMBER B"/>
    <property type="match status" value="1"/>
</dbReference>
<dbReference type="Pfam" id="PF08449">
    <property type="entry name" value="UAA"/>
    <property type="match status" value="1"/>
</dbReference>
<dbReference type="SUPFAM" id="SSF103481">
    <property type="entry name" value="Multidrug resistance efflux transporter EmrE"/>
    <property type="match status" value="1"/>
</dbReference>
<gene>
    <name evidence="1" type="primary">SLC35B2</name>
</gene>
<organism>
    <name type="scientific">Pongo abelii</name>
    <name type="common">Sumatran orangutan</name>
    <name type="synonym">Pongo pygmaeus abelii</name>
    <dbReference type="NCBI Taxonomy" id="9601"/>
    <lineage>
        <taxon>Eukaryota</taxon>
        <taxon>Metazoa</taxon>
        <taxon>Chordata</taxon>
        <taxon>Craniata</taxon>
        <taxon>Vertebrata</taxon>
        <taxon>Euteleostomi</taxon>
        <taxon>Mammalia</taxon>
        <taxon>Eutheria</taxon>
        <taxon>Euarchontoglires</taxon>
        <taxon>Primates</taxon>
        <taxon>Haplorrhini</taxon>
        <taxon>Catarrhini</taxon>
        <taxon>Hominidae</taxon>
        <taxon>Pongo</taxon>
    </lineage>
</organism>
<sequence length="432" mass="47543">MDARWWAVVVLAAFPSLGAGGETPEAPPESWTQLWFFRFVVNAAGYASFMVPGYLLVQYFRRKNYLETGRGLCFPLVKACVFGNEPKASDEVPLAPRTEAAETTPMWQALKLLFCATGLQVSYLTWGVLQERVMTRSYGATATSPGERFTDSQFLVLMNRVLALIVAGLSCVLCKQPRHGAPMYRYSFASLSNVLSSWCQYEALKFVSFPTQVLAKVSKVIPVMLMGKLVSRRSYEHWEYLTATLISIGVSMFLLSSGPEPRSSPATTLSGLILLAGYIAFDSFTSNWQDALFAYKMSSVQMMFGVNFFSCLFTVGSLLEQGALLEGTRFMGRHSEFAAHALLLSICSACGQLFIFYTIGQFGAAVFTIIMTLRQAFAILLSCLLYGHTVTVVGGLGVAVVFAALLLRVYARGRLKQRGKKAVPVESPVQKV</sequence>
<name>S35B2_PONAB</name>
<protein>
    <recommendedName>
        <fullName evidence="3">Adenosine 3'-phospho 5'-phosphosulfate transporter 1</fullName>
    </recommendedName>
    <alternativeName>
        <fullName evidence="1">Solute carrier family 35 member B2</fullName>
    </alternativeName>
</protein>
<reference key="1">
    <citation type="submission" date="2004-11" db="EMBL/GenBank/DDBJ databases">
        <authorList>
            <consortium name="The German cDNA consortium"/>
        </authorList>
    </citation>
    <scope>NUCLEOTIDE SEQUENCE [LARGE SCALE MRNA]</scope>
    <source>
        <tissue>Brain cortex</tissue>
    </source>
</reference>